<proteinExistence type="inferred from homology"/>
<name>Y3215_MYCBO</name>
<evidence type="ECO:0000255" key="1">
    <source>
        <dbReference type="HAMAP-Rule" id="MF_01600"/>
    </source>
</evidence>
<evidence type="ECO:0000256" key="2">
    <source>
        <dbReference type="SAM" id="MobiDB-lite"/>
    </source>
</evidence>
<sequence length="992" mass="107474">MGMRSAARMPKLTRRSRILIMIALGVIVLLLAGPRLIDAYVDWLWFGELGYRSVFTTMLATRIVVCLVAGVVVGGIVFGGLALAYRTRPVFVPDADNDPVARYRAVVLARLRLVGIGIPAAIGLLAGIVAQSYWARIQLFLHGGDFGVRDPQFGRDLGFYAFELPFYRLMLSYMLVSVFLAFVANLVAHYIFGGIRLSGRTGALSRSARVQLVSLVGVLVLLKAVAYWLDRYELLSHTRGGKPFTGAGYTDINAVLPAKLILMAIALICAAAVFSAIALRDLRIPAIGLVLLLLSSLIVGAGWPLIVEQISVKPNAAQKESEYISRSITATRQAYGLTSDVVTYRNYSGDSPATAQQVAADRATTSNIRLLDPTIVSPAFTQFQQGKNFYYFPDQLSIDRYLDRNGNLRDYVVAARELNPDRLIDNQRDWINRHTVYTHGNGFIASPANTVRGIANDPNQNGGYPEFLVNVVGANGTVVSDGPAPLDQPRIYFGPVISNTSADYAIVGRNGDDREYDYETNIDTKRYTYTGSGGVPLGGWLARSVFAAKFAERNFLFSNVIGSNSKILFNRDPAQRVEAVAPWLTTDSAVYPAIVNKRLVWIVDGYTTLDNYPYSELTSLSSATADSNEVAFNRLVPDKKVSYIRNSVKATVDAYDGTVTLYQQDEKDPVLKAWMQVFPGTVKPKSDIAPELAEHLRYPEDLFKVQRMLLAKYHVNDPVTFFSTSDFWDVPLDPNPTASSYQPPYYIVAKNIAKDDNSASYQLISAMNRFKRDYLAAYISASSDPATYGNLTVLTIPGQVNGPKLANNAITTDPAVSQDLGVIGRDNQNRIRWGNLLTLPVAQGGLLYVEPVYASPGASDAASSYPRLIRVAMMYNDKVGYGPTVRDALTGLFGPGAGATATGIAPTEAAVPPSPAANPPPPASGPQPPPVTAAPPVPVGAVTLSPAKVAALQEIQAAIGAARDAQKKGDFAAYGSALQRLDEAITKFNDAG</sequence>
<comment type="subcellular location">
    <subcellularLocation>
        <location evidence="1">Cell membrane</location>
        <topology evidence="1">Multi-pass membrane protein</topology>
    </subcellularLocation>
</comment>
<comment type="similarity">
    <text evidence="1">Belongs to the UPF0182 family.</text>
</comment>
<accession>Q7TX22</accession>
<accession>A0A1R3Y3D9</accession>
<accession>X2BMH8</accession>
<gene>
    <name type="ordered locus">BQ2027_MB3215C</name>
</gene>
<feature type="chain" id="PRO_0000157721" description="UPF0182 protein Mb3215c">
    <location>
        <begin position="1"/>
        <end position="992"/>
    </location>
</feature>
<feature type="transmembrane region" description="Helical" evidence="1">
    <location>
        <begin position="17"/>
        <end position="39"/>
    </location>
</feature>
<feature type="transmembrane region" description="Helical" evidence="1">
    <location>
        <begin position="59"/>
        <end position="81"/>
    </location>
</feature>
<feature type="transmembrane region" description="Helical" evidence="1">
    <location>
        <begin position="113"/>
        <end position="135"/>
    </location>
</feature>
<feature type="transmembrane region" description="Helical" evidence="1">
    <location>
        <begin position="169"/>
        <end position="191"/>
    </location>
</feature>
<feature type="transmembrane region" description="Helical" evidence="1">
    <location>
        <begin position="212"/>
        <end position="229"/>
    </location>
</feature>
<feature type="transmembrane region" description="Helical" evidence="1">
    <location>
        <begin position="255"/>
        <end position="277"/>
    </location>
</feature>
<feature type="transmembrane region" description="Helical" evidence="1">
    <location>
        <begin position="284"/>
        <end position="306"/>
    </location>
</feature>
<feature type="region of interest" description="Disordered" evidence="2">
    <location>
        <begin position="906"/>
        <end position="938"/>
    </location>
</feature>
<feature type="compositionally biased region" description="Pro residues" evidence="2">
    <location>
        <begin position="912"/>
        <end position="938"/>
    </location>
</feature>
<reference key="1">
    <citation type="journal article" date="2003" name="Proc. Natl. Acad. Sci. U.S.A.">
        <title>The complete genome sequence of Mycobacterium bovis.</title>
        <authorList>
            <person name="Garnier T."/>
            <person name="Eiglmeier K."/>
            <person name="Camus J.-C."/>
            <person name="Medina N."/>
            <person name="Mansoor H."/>
            <person name="Pryor M."/>
            <person name="Duthoy S."/>
            <person name="Grondin S."/>
            <person name="Lacroix C."/>
            <person name="Monsempe C."/>
            <person name="Simon S."/>
            <person name="Harris B."/>
            <person name="Atkin R."/>
            <person name="Doggett J."/>
            <person name="Mayes R."/>
            <person name="Keating L."/>
            <person name="Wheeler P.R."/>
            <person name="Parkhill J."/>
            <person name="Barrell B.G."/>
            <person name="Cole S.T."/>
            <person name="Gordon S.V."/>
            <person name="Hewinson R.G."/>
        </authorList>
    </citation>
    <scope>NUCLEOTIDE SEQUENCE [LARGE SCALE GENOMIC DNA]</scope>
    <source>
        <strain>ATCC BAA-935 / AF2122/97</strain>
    </source>
</reference>
<reference key="2">
    <citation type="journal article" date="2017" name="Genome Announc.">
        <title>Updated reference genome sequence and annotation of Mycobacterium bovis AF2122/97.</title>
        <authorList>
            <person name="Malone K.M."/>
            <person name="Farrell D."/>
            <person name="Stuber T.P."/>
            <person name="Schubert O.T."/>
            <person name="Aebersold R."/>
            <person name="Robbe-Austerman S."/>
            <person name="Gordon S.V."/>
        </authorList>
    </citation>
    <scope>NUCLEOTIDE SEQUENCE [LARGE SCALE GENOMIC DNA]</scope>
    <scope>GENOME REANNOTATION</scope>
    <source>
        <strain>ATCC BAA-935 / AF2122/97</strain>
    </source>
</reference>
<dbReference type="EMBL" id="LT708304">
    <property type="protein sequence ID" value="SIU01843.1"/>
    <property type="molecule type" value="Genomic_DNA"/>
</dbReference>
<dbReference type="RefSeq" id="NP_856860.1">
    <property type="nucleotide sequence ID" value="NC_002945.3"/>
</dbReference>
<dbReference type="RefSeq" id="WP_003416795.1">
    <property type="nucleotide sequence ID" value="NC_002945.4"/>
</dbReference>
<dbReference type="SMR" id="Q7TX22"/>
<dbReference type="KEGG" id="mbo:BQ2027_MB3215C"/>
<dbReference type="PATRIC" id="fig|233413.5.peg.3540"/>
<dbReference type="Proteomes" id="UP000001419">
    <property type="component" value="Chromosome"/>
</dbReference>
<dbReference type="GO" id="GO:0005576">
    <property type="term" value="C:extracellular region"/>
    <property type="evidence" value="ECO:0007669"/>
    <property type="project" value="TreeGrafter"/>
</dbReference>
<dbReference type="GO" id="GO:0005886">
    <property type="term" value="C:plasma membrane"/>
    <property type="evidence" value="ECO:0007669"/>
    <property type="project" value="UniProtKB-SubCell"/>
</dbReference>
<dbReference type="HAMAP" id="MF_01600">
    <property type="entry name" value="UPF0182"/>
    <property type="match status" value="1"/>
</dbReference>
<dbReference type="InterPro" id="IPR005372">
    <property type="entry name" value="UPF0182"/>
</dbReference>
<dbReference type="NCBIfam" id="NF000825">
    <property type="entry name" value="PRK00068.1"/>
    <property type="match status" value="1"/>
</dbReference>
<dbReference type="NCBIfam" id="NF009097">
    <property type="entry name" value="PRK12438.1"/>
    <property type="match status" value="1"/>
</dbReference>
<dbReference type="PANTHER" id="PTHR39344">
    <property type="entry name" value="UPF0182 PROTEIN SLL1060"/>
    <property type="match status" value="1"/>
</dbReference>
<dbReference type="PANTHER" id="PTHR39344:SF1">
    <property type="entry name" value="UPF0182 PROTEIN SLL1060"/>
    <property type="match status" value="1"/>
</dbReference>
<dbReference type="Pfam" id="PF03699">
    <property type="entry name" value="UPF0182"/>
    <property type="match status" value="1"/>
</dbReference>
<keyword id="KW-1003">Cell membrane</keyword>
<keyword id="KW-0472">Membrane</keyword>
<keyword id="KW-1185">Reference proteome</keyword>
<keyword id="KW-0812">Transmembrane</keyword>
<keyword id="KW-1133">Transmembrane helix</keyword>
<protein>
    <recommendedName>
        <fullName evidence="1">UPF0182 protein Mb3215c</fullName>
    </recommendedName>
</protein>
<organism>
    <name type="scientific">Mycobacterium bovis (strain ATCC BAA-935 / AF2122/97)</name>
    <dbReference type="NCBI Taxonomy" id="233413"/>
    <lineage>
        <taxon>Bacteria</taxon>
        <taxon>Bacillati</taxon>
        <taxon>Actinomycetota</taxon>
        <taxon>Actinomycetes</taxon>
        <taxon>Mycobacteriales</taxon>
        <taxon>Mycobacteriaceae</taxon>
        <taxon>Mycobacterium</taxon>
        <taxon>Mycobacterium tuberculosis complex</taxon>
    </lineage>
</organism>